<dbReference type="EMBL" id="BC124048">
    <property type="protein sequence ID" value="AAI24049.1"/>
    <property type="molecule type" value="mRNA"/>
</dbReference>
<dbReference type="RefSeq" id="NP_001072704.1">
    <property type="nucleotide sequence ID" value="NM_001079236.2"/>
</dbReference>
<dbReference type="RefSeq" id="XP_012821264.1">
    <property type="nucleotide sequence ID" value="XM_012965810.2"/>
</dbReference>
<dbReference type="RefSeq" id="XP_012821265.1">
    <property type="nucleotide sequence ID" value="XM_012965811.2"/>
</dbReference>
<dbReference type="RefSeq" id="XP_012821266.1">
    <property type="nucleotide sequence ID" value="XM_012965812.2"/>
</dbReference>
<dbReference type="SMR" id="Q08CX2"/>
<dbReference type="FunCoup" id="Q08CX2">
    <property type="interactions" value="914"/>
</dbReference>
<dbReference type="STRING" id="8364.ENSXETP00000037382"/>
<dbReference type="PaxDb" id="8364-ENSXETP00000009693"/>
<dbReference type="DNASU" id="780161"/>
<dbReference type="GeneID" id="780161"/>
<dbReference type="KEGG" id="xtr:780161"/>
<dbReference type="AGR" id="Xenbase:XB-GENE-492416"/>
<dbReference type="CTD" id="63898"/>
<dbReference type="Xenbase" id="XB-GENE-492416">
    <property type="gene designation" value="sh2d4a"/>
</dbReference>
<dbReference type="eggNOG" id="ENOG502QVV5">
    <property type="taxonomic scope" value="Eukaryota"/>
</dbReference>
<dbReference type="HOGENOM" id="CLU_029296_1_0_1"/>
<dbReference type="InParanoid" id="Q08CX2"/>
<dbReference type="OMA" id="NRMKTYG"/>
<dbReference type="OrthoDB" id="10003345at2759"/>
<dbReference type="TreeFam" id="TF336893"/>
<dbReference type="Proteomes" id="UP000008143">
    <property type="component" value="Chromosome 1"/>
</dbReference>
<dbReference type="Bgee" id="ENSXETG00000004464">
    <property type="expression patterns" value="Expressed in ovary and 14 other cell types or tissues"/>
</dbReference>
<dbReference type="ExpressionAtlas" id="Q08CX2">
    <property type="expression patterns" value="differential"/>
</dbReference>
<dbReference type="GO" id="GO:0005737">
    <property type="term" value="C:cytoplasm"/>
    <property type="evidence" value="ECO:0007669"/>
    <property type="project" value="UniProtKB-SubCell"/>
</dbReference>
<dbReference type="GO" id="GO:0019902">
    <property type="term" value="F:phosphatase binding"/>
    <property type="evidence" value="ECO:0000250"/>
    <property type="project" value="UniProtKB"/>
</dbReference>
<dbReference type="CDD" id="cd10350">
    <property type="entry name" value="SH2_SH2D4A"/>
    <property type="match status" value="1"/>
</dbReference>
<dbReference type="FunFam" id="3.30.505.10:FF:000034">
    <property type="entry name" value="SH2 domain-containing protein 4A"/>
    <property type="match status" value="1"/>
</dbReference>
<dbReference type="Gene3D" id="3.30.505.10">
    <property type="entry name" value="SH2 domain"/>
    <property type="match status" value="1"/>
</dbReference>
<dbReference type="InterPro" id="IPR000980">
    <property type="entry name" value="SH2"/>
</dbReference>
<dbReference type="InterPro" id="IPR036860">
    <property type="entry name" value="SH2_dom_sf"/>
</dbReference>
<dbReference type="PANTHER" id="PTHR14388:SF5">
    <property type="entry name" value="SH2 DOMAIN-CONTAINING PROTEIN 4A"/>
    <property type="match status" value="1"/>
</dbReference>
<dbReference type="PANTHER" id="PTHR14388">
    <property type="entry name" value="T CELL-SPECIFIC ADAPTER PROTEIN TSAD"/>
    <property type="match status" value="1"/>
</dbReference>
<dbReference type="Pfam" id="PF00017">
    <property type="entry name" value="SH2"/>
    <property type="match status" value="1"/>
</dbReference>
<dbReference type="PRINTS" id="PR00401">
    <property type="entry name" value="SH2DOMAIN"/>
</dbReference>
<dbReference type="SMART" id="SM00252">
    <property type="entry name" value="SH2"/>
    <property type="match status" value="1"/>
</dbReference>
<dbReference type="SUPFAM" id="SSF55550">
    <property type="entry name" value="SH2 domain"/>
    <property type="match status" value="1"/>
</dbReference>
<dbReference type="PROSITE" id="PS50001">
    <property type="entry name" value="SH2"/>
    <property type="match status" value="1"/>
</dbReference>
<feature type="chain" id="PRO_0000308602" description="SH2 domain-containing protein 4A">
    <location>
        <begin position="1"/>
        <end position="453"/>
    </location>
</feature>
<feature type="domain" description="SH2" evidence="3">
    <location>
        <begin position="347"/>
        <end position="439"/>
    </location>
</feature>
<feature type="region of interest" description="Disordered" evidence="4">
    <location>
        <begin position="280"/>
        <end position="301"/>
    </location>
</feature>
<feature type="coiled-coil region" evidence="2">
    <location>
        <begin position="96"/>
        <end position="127"/>
    </location>
</feature>
<feature type="compositionally biased region" description="Pro residues" evidence="4">
    <location>
        <begin position="284"/>
        <end position="293"/>
    </location>
</feature>
<accession>Q08CX2</accession>
<keyword id="KW-0175">Coiled coil</keyword>
<keyword id="KW-0963">Cytoplasm</keyword>
<keyword id="KW-1185">Reference proteome</keyword>
<keyword id="KW-0727">SH2 domain</keyword>
<name>SH24A_XENTR</name>
<evidence type="ECO:0000250" key="1"/>
<evidence type="ECO:0000255" key="2"/>
<evidence type="ECO:0000255" key="3">
    <source>
        <dbReference type="PROSITE-ProRule" id="PRU00191"/>
    </source>
</evidence>
<evidence type="ECO:0000256" key="4">
    <source>
        <dbReference type="SAM" id="MobiDB-lite"/>
    </source>
</evidence>
<sequence length="453" mass="53004">MLKQILADMYIDPELLAELSEEQKQILFFKMRQEQIRRWQEWEAKCDQNEDKKRNSRPRKACNKSVHWRFGTDQEVWVWVMGEHSSDKPYDQICDEIIAEQARREAEKEAEQLRKKQEVELSQLSTLRLHPHNNADLLKKNTDTKQMVNENVRIANQQIINDENQSIIEKPRTVEDILSAATSKNKYEVKQKKENILKEKENDRLQERTQEIYMNWKEAQEVKQKLEKEDKEWQESLRKSKLADERRRSVAKQARDDYKRLSMQGINRGKVADTAKTFGAVKRPPIPPKPKLPPSANNSSINRMDRRQGIRRLNSAINRENIIKWFKEEQLPLKAGWDKSGSYVEPWFHGIISRQESEQLLGSHGHGSFLLRVSEKIQGYVLSYCSEEGCAHFLIDASATSYSFLGVDQLQHTTLADLVEYHKTEPIPSLGRELLRFPCGQKKGVCDYSDLLE</sequence>
<proteinExistence type="evidence at transcript level"/>
<comment type="function">
    <text evidence="1">Inhibits estrogen-induced cell proliferation.</text>
</comment>
<comment type="subcellular location">
    <subcellularLocation>
        <location evidence="1">Cytoplasm</location>
    </subcellularLocation>
</comment>
<gene>
    <name type="primary">sh2d4a</name>
</gene>
<protein>
    <recommendedName>
        <fullName>SH2 domain-containing protein 4A</fullName>
    </recommendedName>
</protein>
<organism>
    <name type="scientific">Xenopus tropicalis</name>
    <name type="common">Western clawed frog</name>
    <name type="synonym">Silurana tropicalis</name>
    <dbReference type="NCBI Taxonomy" id="8364"/>
    <lineage>
        <taxon>Eukaryota</taxon>
        <taxon>Metazoa</taxon>
        <taxon>Chordata</taxon>
        <taxon>Craniata</taxon>
        <taxon>Vertebrata</taxon>
        <taxon>Euteleostomi</taxon>
        <taxon>Amphibia</taxon>
        <taxon>Batrachia</taxon>
        <taxon>Anura</taxon>
        <taxon>Pipoidea</taxon>
        <taxon>Pipidae</taxon>
        <taxon>Xenopodinae</taxon>
        <taxon>Xenopus</taxon>
        <taxon>Silurana</taxon>
    </lineage>
</organism>
<reference key="1">
    <citation type="submission" date="2006-09" db="EMBL/GenBank/DDBJ databases">
        <authorList>
            <consortium name="NIH - Xenopus Gene Collection (XGC) project"/>
        </authorList>
    </citation>
    <scope>NUCLEOTIDE SEQUENCE [LARGE SCALE MRNA]</scope>
    <source>
        <strain>N6</strain>
        <tissue>Oviduct</tissue>
    </source>
</reference>